<sequence>MNNYETVFILNPVLSDEQIKETVKKYEDFLVSKGAEMVAKEDWGLRKLAYAIQHKKSGFYHLFEYKAPGDAIEPLELEFRREERMMRYLTVKLDKHAIAWAEKRRKRNKEKA</sequence>
<accession>A0M0D7</accession>
<feature type="chain" id="PRO_1000005268" description="Small ribosomal subunit protein bS6">
    <location>
        <begin position="1"/>
        <end position="112"/>
    </location>
</feature>
<dbReference type="EMBL" id="CU207366">
    <property type="protein sequence ID" value="CAL66082.1"/>
    <property type="molecule type" value="Genomic_DNA"/>
</dbReference>
<dbReference type="RefSeq" id="WP_011709001.1">
    <property type="nucleotide sequence ID" value="NC_008571.1"/>
</dbReference>
<dbReference type="SMR" id="A0M0D7"/>
<dbReference type="STRING" id="411154.GFO_1108"/>
<dbReference type="KEGG" id="gfo:GFO_1108"/>
<dbReference type="eggNOG" id="COG0360">
    <property type="taxonomic scope" value="Bacteria"/>
</dbReference>
<dbReference type="HOGENOM" id="CLU_113441_4_3_10"/>
<dbReference type="OrthoDB" id="9812702at2"/>
<dbReference type="Proteomes" id="UP000000755">
    <property type="component" value="Chromosome"/>
</dbReference>
<dbReference type="GO" id="GO:0005737">
    <property type="term" value="C:cytoplasm"/>
    <property type="evidence" value="ECO:0007669"/>
    <property type="project" value="UniProtKB-ARBA"/>
</dbReference>
<dbReference type="GO" id="GO:1990904">
    <property type="term" value="C:ribonucleoprotein complex"/>
    <property type="evidence" value="ECO:0007669"/>
    <property type="project" value="UniProtKB-KW"/>
</dbReference>
<dbReference type="GO" id="GO:0005840">
    <property type="term" value="C:ribosome"/>
    <property type="evidence" value="ECO:0007669"/>
    <property type="project" value="UniProtKB-KW"/>
</dbReference>
<dbReference type="GO" id="GO:0070181">
    <property type="term" value="F:small ribosomal subunit rRNA binding"/>
    <property type="evidence" value="ECO:0007669"/>
    <property type="project" value="TreeGrafter"/>
</dbReference>
<dbReference type="GO" id="GO:0003735">
    <property type="term" value="F:structural constituent of ribosome"/>
    <property type="evidence" value="ECO:0007669"/>
    <property type="project" value="InterPro"/>
</dbReference>
<dbReference type="GO" id="GO:0006412">
    <property type="term" value="P:translation"/>
    <property type="evidence" value="ECO:0007669"/>
    <property type="project" value="UniProtKB-UniRule"/>
</dbReference>
<dbReference type="CDD" id="cd00473">
    <property type="entry name" value="bS6"/>
    <property type="match status" value="1"/>
</dbReference>
<dbReference type="Gene3D" id="3.30.70.60">
    <property type="match status" value="1"/>
</dbReference>
<dbReference type="HAMAP" id="MF_00360">
    <property type="entry name" value="Ribosomal_bS6"/>
    <property type="match status" value="1"/>
</dbReference>
<dbReference type="InterPro" id="IPR000529">
    <property type="entry name" value="Ribosomal_bS6"/>
</dbReference>
<dbReference type="InterPro" id="IPR035980">
    <property type="entry name" value="Ribosomal_bS6_sf"/>
</dbReference>
<dbReference type="InterPro" id="IPR020814">
    <property type="entry name" value="Ribosomal_S6_plastid/chlpt"/>
</dbReference>
<dbReference type="InterPro" id="IPR014717">
    <property type="entry name" value="Transl_elong_EF1B/ribsomal_bS6"/>
</dbReference>
<dbReference type="NCBIfam" id="TIGR00166">
    <property type="entry name" value="S6"/>
    <property type="match status" value="1"/>
</dbReference>
<dbReference type="PANTHER" id="PTHR21011">
    <property type="entry name" value="MITOCHONDRIAL 28S RIBOSOMAL PROTEIN S6"/>
    <property type="match status" value="1"/>
</dbReference>
<dbReference type="PANTHER" id="PTHR21011:SF1">
    <property type="entry name" value="SMALL RIBOSOMAL SUBUNIT PROTEIN BS6M"/>
    <property type="match status" value="1"/>
</dbReference>
<dbReference type="Pfam" id="PF01250">
    <property type="entry name" value="Ribosomal_S6"/>
    <property type="match status" value="1"/>
</dbReference>
<dbReference type="SUPFAM" id="SSF54995">
    <property type="entry name" value="Ribosomal protein S6"/>
    <property type="match status" value="1"/>
</dbReference>
<proteinExistence type="inferred from homology"/>
<keyword id="KW-0687">Ribonucleoprotein</keyword>
<keyword id="KW-0689">Ribosomal protein</keyword>
<keyword id="KW-0694">RNA-binding</keyword>
<keyword id="KW-0699">rRNA-binding</keyword>
<name>RS6_CHRFK</name>
<gene>
    <name evidence="1" type="primary">rpsF</name>
    <name type="ordered locus">GFO_1108</name>
</gene>
<comment type="function">
    <text evidence="1">Binds together with bS18 to 16S ribosomal RNA.</text>
</comment>
<comment type="similarity">
    <text evidence="1">Belongs to the bacterial ribosomal protein bS6 family.</text>
</comment>
<organism>
    <name type="scientific">Christiangramia forsetii (strain DSM 17595 / CGMCC 1.15422 / KT0803)</name>
    <name type="common">Gramella forsetii</name>
    <dbReference type="NCBI Taxonomy" id="411154"/>
    <lineage>
        <taxon>Bacteria</taxon>
        <taxon>Pseudomonadati</taxon>
        <taxon>Bacteroidota</taxon>
        <taxon>Flavobacteriia</taxon>
        <taxon>Flavobacteriales</taxon>
        <taxon>Flavobacteriaceae</taxon>
        <taxon>Christiangramia</taxon>
    </lineage>
</organism>
<evidence type="ECO:0000255" key="1">
    <source>
        <dbReference type="HAMAP-Rule" id="MF_00360"/>
    </source>
</evidence>
<evidence type="ECO:0000305" key="2"/>
<protein>
    <recommendedName>
        <fullName evidence="1">Small ribosomal subunit protein bS6</fullName>
    </recommendedName>
    <alternativeName>
        <fullName evidence="2">30S ribosomal protein S6</fullName>
    </alternativeName>
</protein>
<reference key="1">
    <citation type="journal article" date="2006" name="Environ. Microbiol.">
        <title>Whole genome analysis of the marine Bacteroidetes'Gramella forsetii' reveals adaptations to degradation of polymeric organic matter.</title>
        <authorList>
            <person name="Bauer M."/>
            <person name="Kube M."/>
            <person name="Teeling H."/>
            <person name="Richter M."/>
            <person name="Lombardot T."/>
            <person name="Allers E."/>
            <person name="Wuerdemann C.A."/>
            <person name="Quast C."/>
            <person name="Kuhl H."/>
            <person name="Knaust F."/>
            <person name="Woebken D."/>
            <person name="Bischof K."/>
            <person name="Mussmann M."/>
            <person name="Choudhuri J.V."/>
            <person name="Meyer F."/>
            <person name="Reinhardt R."/>
            <person name="Amann R.I."/>
            <person name="Gloeckner F.O."/>
        </authorList>
    </citation>
    <scope>NUCLEOTIDE SEQUENCE [LARGE SCALE GENOMIC DNA]</scope>
    <source>
        <strain>DSM 17595 / CGMCC 1.15422 / KT0803</strain>
    </source>
</reference>